<proteinExistence type="inferred from homology"/>
<dbReference type="EMBL" id="CP000240">
    <property type="protein sequence ID" value="ABD03099.1"/>
    <property type="molecule type" value="Genomic_DNA"/>
</dbReference>
<dbReference type="SMR" id="Q2JJR3"/>
<dbReference type="STRING" id="321332.CYB_2153"/>
<dbReference type="KEGG" id="cyb:CYB_2153"/>
<dbReference type="eggNOG" id="COG4447">
    <property type="taxonomic scope" value="Bacteria"/>
</dbReference>
<dbReference type="HOGENOM" id="CLU_057027_0_0_3"/>
<dbReference type="OrthoDB" id="9813892at2"/>
<dbReference type="Proteomes" id="UP000001938">
    <property type="component" value="Chromosome"/>
</dbReference>
<dbReference type="GO" id="GO:0009523">
    <property type="term" value="C:photosystem II"/>
    <property type="evidence" value="ECO:0007669"/>
    <property type="project" value="UniProtKB-KW"/>
</dbReference>
<dbReference type="GO" id="GO:0031979">
    <property type="term" value="C:plasma membrane-derived thylakoid lumen"/>
    <property type="evidence" value="ECO:0007669"/>
    <property type="project" value="UniProtKB-SubCell"/>
</dbReference>
<dbReference type="GO" id="GO:0015979">
    <property type="term" value="P:photosynthesis"/>
    <property type="evidence" value="ECO:0007669"/>
    <property type="project" value="UniProtKB-KW"/>
</dbReference>
<dbReference type="Gene3D" id="2.130.10.10">
    <property type="entry name" value="YVTN repeat-like/Quinoprotein amine dehydrogenase"/>
    <property type="match status" value="1"/>
</dbReference>
<dbReference type="HAMAP" id="MF_01348">
    <property type="entry name" value="Ycf48"/>
    <property type="match status" value="1"/>
</dbReference>
<dbReference type="InterPro" id="IPR028203">
    <property type="entry name" value="PSII_CF48-like_dom"/>
</dbReference>
<dbReference type="InterPro" id="IPR015943">
    <property type="entry name" value="WD40/YVTN_repeat-like_dom_sf"/>
</dbReference>
<dbReference type="InterPro" id="IPR016705">
    <property type="entry name" value="Ycf48/Hcf136"/>
</dbReference>
<dbReference type="NCBIfam" id="NF010237">
    <property type="entry name" value="PRK13684.1"/>
    <property type="match status" value="1"/>
</dbReference>
<dbReference type="PANTHER" id="PTHR47199">
    <property type="entry name" value="PHOTOSYSTEM II STABILITY/ASSEMBLY FACTOR HCF136, CHLOROPLASTIC"/>
    <property type="match status" value="1"/>
</dbReference>
<dbReference type="PANTHER" id="PTHR47199:SF2">
    <property type="entry name" value="PHOTOSYSTEM II STABILITY_ASSEMBLY FACTOR HCF136, CHLOROPLASTIC"/>
    <property type="match status" value="1"/>
</dbReference>
<dbReference type="Pfam" id="PF14870">
    <property type="entry name" value="PSII_BNR"/>
    <property type="match status" value="1"/>
</dbReference>
<dbReference type="PIRSF" id="PIRSF017875">
    <property type="entry name" value="PSII_HCF136"/>
    <property type="match status" value="1"/>
</dbReference>
<dbReference type="SUPFAM" id="SSF110296">
    <property type="entry name" value="Oligoxyloglucan reducing end-specific cellobiohydrolase"/>
    <property type="match status" value="1"/>
</dbReference>
<name>YCF48_SYNJB</name>
<sequence length="333" mass="36651">MRVKMFKPLRLVLLIAVSVLLMAARMPNMRVVPWQQVEVPTQNILLDIAFTGTTPSHGWLVGDKATLLESRDGGLHWQVRELPGLEPEAYLASISFAGAEGWVAGQPKILLHTLNEGSDWTSIRLNNQLPGEPLLIQALGPGAAEMVTNVGAIYRTEDGGQTWHAQVDEPIGAIKNIARGPEGEYLAVSSRGSFYFLYTPESRTWKPYPRESSRRIQNMGFGPHGSAWKLNQGAEIAFTDDFTSGQWSSPLRPGRALSFGYLNAAYQNDHDLWVVGGGATLIHSPDGGKTWEQAKKLSNIPANFYSIEFFGPEQGFILGQRGTLLRYVSSNNS</sequence>
<gene>
    <name evidence="1" type="primary">ycf48</name>
    <name type="ordered locus">CYB_2153</name>
</gene>
<reference key="1">
    <citation type="journal article" date="2007" name="ISME J.">
        <title>Population level functional diversity in a microbial community revealed by comparative genomic and metagenomic analyses.</title>
        <authorList>
            <person name="Bhaya D."/>
            <person name="Grossman A.R."/>
            <person name="Steunou A.-S."/>
            <person name="Khuri N."/>
            <person name="Cohan F.M."/>
            <person name="Hamamura N."/>
            <person name="Melendrez M.C."/>
            <person name="Bateson M.M."/>
            <person name="Ward D.M."/>
            <person name="Heidelberg J.F."/>
        </authorList>
    </citation>
    <scope>NUCLEOTIDE SEQUENCE [LARGE SCALE GENOMIC DNA]</scope>
    <source>
        <strain>JA-2-3B'a(2-13)</strain>
    </source>
</reference>
<protein>
    <recommendedName>
        <fullName evidence="1">Photosystem II assembly protein Ycf48</fullName>
    </recommendedName>
</protein>
<feature type="signal peptide" evidence="1">
    <location>
        <begin position="1"/>
        <end position="25"/>
    </location>
</feature>
<feature type="chain" id="PRO_0000239683" description="Photosystem II assembly protein Ycf48" evidence="1">
    <location>
        <begin position="26"/>
        <end position="333"/>
    </location>
</feature>
<evidence type="ECO:0000255" key="1">
    <source>
        <dbReference type="HAMAP-Rule" id="MF_01348"/>
    </source>
</evidence>
<accession>Q2JJR3</accession>
<keyword id="KW-0602">Photosynthesis</keyword>
<keyword id="KW-0604">Photosystem II</keyword>
<keyword id="KW-1185">Reference proteome</keyword>
<keyword id="KW-0732">Signal</keyword>
<keyword id="KW-0793">Thylakoid</keyword>
<comment type="function">
    <text evidence="1">A factor required for optimal assembly of photosystem II (PSII), acting in the early stages of PSII assembly. Also plays a role in replacement of photodamaged D1 (psbA). Assists YidC in synthesis of chlorophyll-binding proteins.</text>
</comment>
<comment type="subunit">
    <text evidence="1">Part of early PSII assembly complexes which includes D1 (psbA) and PsbI; not found in mature PSII. Binds to the lumenal side of PSII complexes. Interacts with YidC.</text>
</comment>
<comment type="subcellular location">
    <subcellularLocation>
        <location evidence="1">Cellular thylakoid lumen</location>
    </subcellularLocation>
    <text evidence="1">Associated with a PSII precusor complex on the lumenal side of the thylakoid membrane.</text>
</comment>
<comment type="domain">
    <text evidence="1">A 7-bladed beta-propeller torus, about 55 by 55 Angstroms, with a depth of about 25 Angstroms and a central pore.</text>
</comment>
<comment type="similarity">
    <text evidence="1">Belongs to the Ycf48 family.</text>
</comment>
<organism>
    <name type="scientific">Synechococcus sp. (strain JA-2-3B'a(2-13))</name>
    <name type="common">Cyanobacteria bacterium Yellowstone B-Prime</name>
    <dbReference type="NCBI Taxonomy" id="321332"/>
    <lineage>
        <taxon>Bacteria</taxon>
        <taxon>Bacillati</taxon>
        <taxon>Cyanobacteriota</taxon>
        <taxon>Cyanophyceae</taxon>
        <taxon>Synechococcales</taxon>
        <taxon>Synechococcaceae</taxon>
        <taxon>Synechococcus</taxon>
    </lineage>
</organism>